<gene>
    <name evidence="1" type="primary">rpsO</name>
    <name type="ordered locus">SAB1135</name>
</gene>
<accession>Q2YXP3</accession>
<organism>
    <name type="scientific">Staphylococcus aureus (strain bovine RF122 / ET3-1)</name>
    <dbReference type="NCBI Taxonomy" id="273036"/>
    <lineage>
        <taxon>Bacteria</taxon>
        <taxon>Bacillati</taxon>
        <taxon>Bacillota</taxon>
        <taxon>Bacilli</taxon>
        <taxon>Bacillales</taxon>
        <taxon>Staphylococcaceae</taxon>
        <taxon>Staphylococcus</taxon>
    </lineage>
</organism>
<name>RS15_STAAB</name>
<comment type="function">
    <text evidence="1">One of the primary rRNA binding proteins, it binds directly to 16S rRNA where it helps nucleate assembly of the platform of the 30S subunit by binding and bridging several RNA helices of the 16S rRNA.</text>
</comment>
<comment type="function">
    <text evidence="1">Forms an intersubunit bridge (bridge B4) with the 23S rRNA of the 50S subunit in the ribosome.</text>
</comment>
<comment type="subunit">
    <text evidence="1">Part of the 30S ribosomal subunit. Forms a bridge to the 50S subunit in the 70S ribosome, contacting the 23S rRNA.</text>
</comment>
<comment type="similarity">
    <text evidence="1">Belongs to the universal ribosomal protein uS15 family.</text>
</comment>
<feature type="chain" id="PRO_0000255533" description="Small ribosomal subunit protein uS15">
    <location>
        <begin position="1"/>
        <end position="89"/>
    </location>
</feature>
<proteinExistence type="evidence at protein level"/>
<sequence length="89" mass="10608">MAISQERKNEIIKEYRVHETDTGSPEVQIAVLTAEINAVNEHLRTHKKDHHSRRGLLKMVGRRRHLLNYLRSKDIQRYRELIKSLGIRR</sequence>
<dbReference type="EMBL" id="AJ938182">
    <property type="protein sequence ID" value="CAI80824.1"/>
    <property type="molecule type" value="Genomic_DNA"/>
</dbReference>
<dbReference type="RefSeq" id="WP_001018328.1">
    <property type="nucleotide sequence ID" value="NC_007622.1"/>
</dbReference>
<dbReference type="PDB" id="6FXC">
    <property type="method" value="EM"/>
    <property type="resolution" value="6.76 A"/>
    <property type="chains" value="Ao/Bo=2-89"/>
</dbReference>
<dbReference type="PDBsum" id="6FXC"/>
<dbReference type="EMDB" id="EMD-3637"/>
<dbReference type="SMR" id="Q2YXP3"/>
<dbReference type="KEGG" id="sab:SAB1135"/>
<dbReference type="HOGENOM" id="CLU_148518_0_0_9"/>
<dbReference type="GO" id="GO:0022627">
    <property type="term" value="C:cytosolic small ribosomal subunit"/>
    <property type="evidence" value="ECO:0007669"/>
    <property type="project" value="TreeGrafter"/>
</dbReference>
<dbReference type="GO" id="GO:0019843">
    <property type="term" value="F:rRNA binding"/>
    <property type="evidence" value="ECO:0007669"/>
    <property type="project" value="UniProtKB-UniRule"/>
</dbReference>
<dbReference type="GO" id="GO:0003735">
    <property type="term" value="F:structural constituent of ribosome"/>
    <property type="evidence" value="ECO:0007669"/>
    <property type="project" value="InterPro"/>
</dbReference>
<dbReference type="GO" id="GO:0006412">
    <property type="term" value="P:translation"/>
    <property type="evidence" value="ECO:0007669"/>
    <property type="project" value="UniProtKB-UniRule"/>
</dbReference>
<dbReference type="CDD" id="cd00353">
    <property type="entry name" value="Ribosomal_S15p_S13e"/>
    <property type="match status" value="1"/>
</dbReference>
<dbReference type="FunFam" id="1.10.287.10:FF:000002">
    <property type="entry name" value="30S ribosomal protein S15"/>
    <property type="match status" value="1"/>
</dbReference>
<dbReference type="Gene3D" id="6.10.250.3130">
    <property type="match status" value="1"/>
</dbReference>
<dbReference type="Gene3D" id="1.10.287.10">
    <property type="entry name" value="S15/NS1, RNA-binding"/>
    <property type="match status" value="1"/>
</dbReference>
<dbReference type="HAMAP" id="MF_01343_B">
    <property type="entry name" value="Ribosomal_uS15_B"/>
    <property type="match status" value="1"/>
</dbReference>
<dbReference type="InterPro" id="IPR000589">
    <property type="entry name" value="Ribosomal_uS15"/>
</dbReference>
<dbReference type="InterPro" id="IPR005290">
    <property type="entry name" value="Ribosomal_uS15_bac-type"/>
</dbReference>
<dbReference type="InterPro" id="IPR009068">
    <property type="entry name" value="uS15_NS1_RNA-bd_sf"/>
</dbReference>
<dbReference type="NCBIfam" id="TIGR00952">
    <property type="entry name" value="S15_bact"/>
    <property type="match status" value="1"/>
</dbReference>
<dbReference type="PANTHER" id="PTHR23321">
    <property type="entry name" value="RIBOSOMAL PROTEIN S15, BACTERIAL AND ORGANELLAR"/>
    <property type="match status" value="1"/>
</dbReference>
<dbReference type="PANTHER" id="PTHR23321:SF26">
    <property type="entry name" value="SMALL RIBOSOMAL SUBUNIT PROTEIN US15M"/>
    <property type="match status" value="1"/>
</dbReference>
<dbReference type="Pfam" id="PF00312">
    <property type="entry name" value="Ribosomal_S15"/>
    <property type="match status" value="1"/>
</dbReference>
<dbReference type="SMART" id="SM01387">
    <property type="entry name" value="Ribosomal_S15"/>
    <property type="match status" value="1"/>
</dbReference>
<dbReference type="SUPFAM" id="SSF47060">
    <property type="entry name" value="S15/NS1 RNA-binding domain"/>
    <property type="match status" value="1"/>
</dbReference>
<dbReference type="PROSITE" id="PS00362">
    <property type="entry name" value="RIBOSOMAL_S15"/>
    <property type="match status" value="1"/>
</dbReference>
<protein>
    <recommendedName>
        <fullName evidence="1">Small ribosomal subunit protein uS15</fullName>
    </recommendedName>
    <alternativeName>
        <fullName evidence="2">30S ribosomal protein S15</fullName>
    </alternativeName>
</protein>
<keyword id="KW-0002">3D-structure</keyword>
<keyword id="KW-0687">Ribonucleoprotein</keyword>
<keyword id="KW-0689">Ribosomal protein</keyword>
<keyword id="KW-0694">RNA-binding</keyword>
<keyword id="KW-0699">rRNA-binding</keyword>
<reference key="1">
    <citation type="journal article" date="2007" name="PLoS ONE">
        <title>Molecular correlates of host specialization in Staphylococcus aureus.</title>
        <authorList>
            <person name="Herron-Olson L."/>
            <person name="Fitzgerald J.R."/>
            <person name="Musser J.M."/>
            <person name="Kapur V."/>
        </authorList>
    </citation>
    <scope>NUCLEOTIDE SEQUENCE [LARGE SCALE GENOMIC DNA]</scope>
    <source>
        <strain>bovine RF122 / ET3-1</strain>
    </source>
</reference>
<evidence type="ECO:0000255" key="1">
    <source>
        <dbReference type="HAMAP-Rule" id="MF_01343"/>
    </source>
</evidence>
<evidence type="ECO:0000305" key="2"/>